<keyword id="KW-1003">Cell membrane</keyword>
<keyword id="KW-0472">Membrane</keyword>
<keyword id="KW-1185">Reference proteome</keyword>
<keyword id="KW-0812">Transmembrane</keyword>
<keyword id="KW-1133">Transmembrane helix</keyword>
<keyword id="KW-0813">Transport</keyword>
<feature type="chain" id="PRO_0000390686" description="Uncharacterized MFS-type transporter Rv2994">
    <location>
        <begin position="1"/>
        <end position="445"/>
    </location>
</feature>
<feature type="transmembrane region" description="Helical" evidence="1">
    <location>
        <begin position="16"/>
        <end position="36"/>
    </location>
</feature>
<feature type="transmembrane region" description="Helical" evidence="1">
    <location>
        <begin position="52"/>
        <end position="72"/>
    </location>
</feature>
<feature type="transmembrane region" description="Helical" evidence="1">
    <location>
        <begin position="98"/>
        <end position="118"/>
    </location>
</feature>
<feature type="transmembrane region" description="Helical" evidence="1">
    <location>
        <begin position="168"/>
        <end position="188"/>
    </location>
</feature>
<feature type="transmembrane region" description="Helical" evidence="1">
    <location>
        <begin position="219"/>
        <end position="239"/>
    </location>
</feature>
<feature type="transmembrane region" description="Helical" evidence="1">
    <location>
        <begin position="243"/>
        <end position="263"/>
    </location>
</feature>
<feature type="transmembrane region" description="Helical" evidence="1">
    <location>
        <begin position="283"/>
        <end position="303"/>
    </location>
</feature>
<feature type="transmembrane region" description="Helical" evidence="1">
    <location>
        <begin position="366"/>
        <end position="386"/>
    </location>
</feature>
<feature type="region of interest" description="Disordered" evidence="2">
    <location>
        <begin position="417"/>
        <end position="445"/>
    </location>
</feature>
<accession>P9WJW7</accession>
<accession>L0TCU9</accession>
<accession>Q7ARU7</accession>
<accession>Q8VJ95</accession>
<comment type="subcellular location">
    <subcellularLocation>
        <location evidence="3">Cell membrane</location>
        <topology evidence="3">Multi-pass membrane protein</topology>
    </subcellularLocation>
</comment>
<comment type="similarity">
    <text evidence="3">Belongs to the major facilitator superfamily.</text>
</comment>
<proteinExistence type="evidence at protein level"/>
<evidence type="ECO:0000255" key="1"/>
<evidence type="ECO:0000256" key="2">
    <source>
        <dbReference type="SAM" id="MobiDB-lite"/>
    </source>
</evidence>
<evidence type="ECO:0000305" key="3"/>
<gene>
    <name type="ordered locus">Rv2994</name>
</gene>
<organism>
    <name type="scientific">Mycobacterium tuberculosis (strain ATCC 25618 / H37Rv)</name>
    <dbReference type="NCBI Taxonomy" id="83332"/>
    <lineage>
        <taxon>Bacteria</taxon>
        <taxon>Bacillati</taxon>
        <taxon>Actinomycetota</taxon>
        <taxon>Actinomycetes</taxon>
        <taxon>Mycobacteriales</taxon>
        <taxon>Mycobacteriaceae</taxon>
        <taxon>Mycobacterium</taxon>
        <taxon>Mycobacterium tuberculosis complex</taxon>
    </lineage>
</organism>
<name>Y2994_MYCTU</name>
<sequence>MSRDPTGVGARWAIMIVSLGVTASSFLFINGVAFLIPRLENARGTPLSHAGLLASMPSWGLVVTMFAWGYLLDHVGERMVMAVGSALTAAAAYAAASVHSLLWIGVFLFLGGMAAGGCNSAGGRLVSGWFPPQQRGLAMGIRQTAQPLGIASGALVIPELAERGVHAGLMFPAVVCTLAAVASVLGIVDPPRKSRTKASEQELASPYRGSSILWRIHAASALLMMPQTVTVTFMLVWLINHHGWSVAQAGVLVTISQLLGALGRVAVGRWSDHVGSRMRPVRLIAAAAAATLFLLAAVDNEGSRYDVLLMIAISVIAVLDNGLEATAITEYAGPYWSGRALGIQNTTQRLMAAAGPPLFGSLITTAAYPTAWALCGVFPLAAVPLVPVRLLPPGLETRARRQSVRRHRWWQAVRCHAWPNGPRRPGPPGQPRRVRQGGTAITPPT</sequence>
<reference key="1">
    <citation type="journal article" date="1998" name="Nature">
        <title>Deciphering the biology of Mycobacterium tuberculosis from the complete genome sequence.</title>
        <authorList>
            <person name="Cole S.T."/>
            <person name="Brosch R."/>
            <person name="Parkhill J."/>
            <person name="Garnier T."/>
            <person name="Churcher C.M."/>
            <person name="Harris D.E."/>
            <person name="Gordon S.V."/>
            <person name="Eiglmeier K."/>
            <person name="Gas S."/>
            <person name="Barry C.E. III"/>
            <person name="Tekaia F."/>
            <person name="Badcock K."/>
            <person name="Basham D."/>
            <person name="Brown D."/>
            <person name="Chillingworth T."/>
            <person name="Connor R."/>
            <person name="Davies R.M."/>
            <person name="Devlin K."/>
            <person name="Feltwell T."/>
            <person name="Gentles S."/>
            <person name="Hamlin N."/>
            <person name="Holroyd S."/>
            <person name="Hornsby T."/>
            <person name="Jagels K."/>
            <person name="Krogh A."/>
            <person name="McLean J."/>
            <person name="Moule S."/>
            <person name="Murphy L.D."/>
            <person name="Oliver S."/>
            <person name="Osborne J."/>
            <person name="Quail M.A."/>
            <person name="Rajandream M.A."/>
            <person name="Rogers J."/>
            <person name="Rutter S."/>
            <person name="Seeger K."/>
            <person name="Skelton S."/>
            <person name="Squares S."/>
            <person name="Squares R."/>
            <person name="Sulston J.E."/>
            <person name="Taylor K."/>
            <person name="Whitehead S."/>
            <person name="Barrell B.G."/>
        </authorList>
    </citation>
    <scope>NUCLEOTIDE SEQUENCE [LARGE SCALE GENOMIC DNA]</scope>
    <source>
        <strain>ATCC 25618 / H37Rv</strain>
    </source>
</reference>
<reference key="2">
    <citation type="journal article" date="2011" name="Mol. Cell. Proteomics">
        <title>Proteogenomic analysis of Mycobacterium tuberculosis by high resolution mass spectrometry.</title>
        <authorList>
            <person name="Kelkar D.S."/>
            <person name="Kumar D."/>
            <person name="Kumar P."/>
            <person name="Balakrishnan L."/>
            <person name="Muthusamy B."/>
            <person name="Yadav A.K."/>
            <person name="Shrivastava P."/>
            <person name="Marimuthu A."/>
            <person name="Anand S."/>
            <person name="Sundaram H."/>
            <person name="Kingsbury R."/>
            <person name="Harsha H.C."/>
            <person name="Nair B."/>
            <person name="Prasad T.S."/>
            <person name="Chauhan D.S."/>
            <person name="Katoch K."/>
            <person name="Katoch V.M."/>
            <person name="Kumar P."/>
            <person name="Chaerkady R."/>
            <person name="Ramachandran S."/>
            <person name="Dash D."/>
            <person name="Pandey A."/>
        </authorList>
    </citation>
    <scope>IDENTIFICATION BY MASS SPECTROMETRY [LARGE SCALE ANALYSIS]</scope>
    <source>
        <strain>ATCC 25618 / H37Rv</strain>
    </source>
</reference>
<protein>
    <recommendedName>
        <fullName>Uncharacterized MFS-type transporter Rv2994</fullName>
    </recommendedName>
</protein>
<dbReference type="EMBL" id="AL123456">
    <property type="protein sequence ID" value="CCP45799.1"/>
    <property type="molecule type" value="Genomic_DNA"/>
</dbReference>
<dbReference type="PIR" id="E70854">
    <property type="entry name" value="E70854"/>
</dbReference>
<dbReference type="RefSeq" id="NP_217510.1">
    <property type="nucleotide sequence ID" value="NC_000962.3"/>
</dbReference>
<dbReference type="RefSeq" id="WP_003415142.1">
    <property type="nucleotide sequence ID" value="NC_000962.3"/>
</dbReference>
<dbReference type="SMR" id="P9WJW7"/>
<dbReference type="FunCoup" id="P9WJW7">
    <property type="interactions" value="64"/>
</dbReference>
<dbReference type="STRING" id="83332.Rv2994"/>
<dbReference type="PaxDb" id="83332-Rv2994"/>
<dbReference type="DNASU" id="888200"/>
<dbReference type="GeneID" id="888200"/>
<dbReference type="KEGG" id="mtu:Rv2994"/>
<dbReference type="KEGG" id="mtv:RVBD_2994"/>
<dbReference type="PATRIC" id="fig|83332.12.peg.3341"/>
<dbReference type="TubercuList" id="Rv2994"/>
<dbReference type="eggNOG" id="COG2271">
    <property type="taxonomic scope" value="Bacteria"/>
</dbReference>
<dbReference type="InParanoid" id="P9WJW7"/>
<dbReference type="OrthoDB" id="8628659at2"/>
<dbReference type="PhylomeDB" id="P9WJW7"/>
<dbReference type="Proteomes" id="UP000001584">
    <property type="component" value="Chromosome"/>
</dbReference>
<dbReference type="GO" id="GO:0005576">
    <property type="term" value="C:extracellular region"/>
    <property type="evidence" value="ECO:0007005"/>
    <property type="project" value="MTBBASE"/>
</dbReference>
<dbReference type="GO" id="GO:0005886">
    <property type="term" value="C:plasma membrane"/>
    <property type="evidence" value="ECO:0007669"/>
    <property type="project" value="UniProtKB-SubCell"/>
</dbReference>
<dbReference type="GO" id="GO:0022857">
    <property type="term" value="F:transmembrane transporter activity"/>
    <property type="evidence" value="ECO:0007669"/>
    <property type="project" value="InterPro"/>
</dbReference>
<dbReference type="CDD" id="cd17475">
    <property type="entry name" value="MFS_MT3072_like"/>
    <property type="match status" value="1"/>
</dbReference>
<dbReference type="FunFam" id="1.20.1250.20:FF:000584">
    <property type="entry name" value="Putative integral membrane protein"/>
    <property type="match status" value="1"/>
</dbReference>
<dbReference type="Gene3D" id="1.20.1250.20">
    <property type="entry name" value="MFS general substrate transporter like domains"/>
    <property type="match status" value="2"/>
</dbReference>
<dbReference type="InterPro" id="IPR011701">
    <property type="entry name" value="MFS"/>
</dbReference>
<dbReference type="InterPro" id="IPR052952">
    <property type="entry name" value="MFS-Transporter"/>
</dbReference>
<dbReference type="InterPro" id="IPR020846">
    <property type="entry name" value="MFS_dom"/>
</dbReference>
<dbReference type="InterPro" id="IPR036259">
    <property type="entry name" value="MFS_trans_sf"/>
</dbReference>
<dbReference type="PANTHER" id="PTHR23527">
    <property type="entry name" value="BLL3282 PROTEIN"/>
    <property type="match status" value="1"/>
</dbReference>
<dbReference type="PANTHER" id="PTHR23527:SF1">
    <property type="entry name" value="BLL3282 PROTEIN"/>
    <property type="match status" value="1"/>
</dbReference>
<dbReference type="Pfam" id="PF07690">
    <property type="entry name" value="MFS_1"/>
    <property type="match status" value="1"/>
</dbReference>
<dbReference type="SUPFAM" id="SSF103473">
    <property type="entry name" value="MFS general substrate transporter"/>
    <property type="match status" value="1"/>
</dbReference>
<dbReference type="PROSITE" id="PS50850">
    <property type="entry name" value="MFS"/>
    <property type="match status" value="1"/>
</dbReference>